<evidence type="ECO:0000255" key="1">
    <source>
        <dbReference type="HAMAP-Rule" id="MF_01347"/>
    </source>
</evidence>
<proteinExistence type="inferred from homology"/>
<name>ATPB_UREPA</name>
<reference key="1">
    <citation type="journal article" date="2000" name="Nature">
        <title>The complete sequence of the mucosal pathogen Ureaplasma urealyticum.</title>
        <authorList>
            <person name="Glass J.I."/>
            <person name="Lefkowitz E.J."/>
            <person name="Glass J.S."/>
            <person name="Heiner C.R."/>
            <person name="Chen E.Y."/>
            <person name="Cassell G.H."/>
        </authorList>
    </citation>
    <scope>NUCLEOTIDE SEQUENCE [LARGE SCALE GENOMIC DNA]</scope>
    <source>
        <strain>ATCC 700970</strain>
    </source>
</reference>
<accession>Q9PR15</accession>
<dbReference type="EC" id="7.1.2.2" evidence="1"/>
<dbReference type="EMBL" id="AF222894">
    <property type="protein sequence ID" value="AAF30535.1"/>
    <property type="molecule type" value="Genomic_DNA"/>
</dbReference>
<dbReference type="RefSeq" id="WP_006688878.1">
    <property type="nucleotide sequence ID" value="NC_002162.1"/>
</dbReference>
<dbReference type="SMR" id="Q9PR15"/>
<dbReference type="STRING" id="273119.UU129"/>
<dbReference type="EnsemblBacteria" id="AAF30535">
    <property type="protein sequence ID" value="AAF30535"/>
    <property type="gene ID" value="UU129"/>
</dbReference>
<dbReference type="GeneID" id="29672255"/>
<dbReference type="KEGG" id="uur:UU129"/>
<dbReference type="eggNOG" id="COG0055">
    <property type="taxonomic scope" value="Bacteria"/>
</dbReference>
<dbReference type="HOGENOM" id="CLU_022398_0_2_14"/>
<dbReference type="OrthoDB" id="9801639at2"/>
<dbReference type="Proteomes" id="UP000000423">
    <property type="component" value="Chromosome"/>
</dbReference>
<dbReference type="GO" id="GO:0005886">
    <property type="term" value="C:plasma membrane"/>
    <property type="evidence" value="ECO:0007669"/>
    <property type="project" value="UniProtKB-SubCell"/>
</dbReference>
<dbReference type="GO" id="GO:0045259">
    <property type="term" value="C:proton-transporting ATP synthase complex"/>
    <property type="evidence" value="ECO:0007669"/>
    <property type="project" value="UniProtKB-KW"/>
</dbReference>
<dbReference type="GO" id="GO:0005524">
    <property type="term" value="F:ATP binding"/>
    <property type="evidence" value="ECO:0007669"/>
    <property type="project" value="UniProtKB-UniRule"/>
</dbReference>
<dbReference type="GO" id="GO:0016887">
    <property type="term" value="F:ATP hydrolysis activity"/>
    <property type="evidence" value="ECO:0007669"/>
    <property type="project" value="InterPro"/>
</dbReference>
<dbReference type="GO" id="GO:0046933">
    <property type="term" value="F:proton-transporting ATP synthase activity, rotational mechanism"/>
    <property type="evidence" value="ECO:0007669"/>
    <property type="project" value="UniProtKB-UniRule"/>
</dbReference>
<dbReference type="CDD" id="cd18110">
    <property type="entry name" value="ATP-synt_F1_beta_C"/>
    <property type="match status" value="1"/>
</dbReference>
<dbReference type="CDD" id="cd18115">
    <property type="entry name" value="ATP-synt_F1_beta_N"/>
    <property type="match status" value="1"/>
</dbReference>
<dbReference type="CDD" id="cd01133">
    <property type="entry name" value="F1-ATPase_beta_CD"/>
    <property type="match status" value="1"/>
</dbReference>
<dbReference type="FunFam" id="1.10.1140.10:FF:000005">
    <property type="entry name" value="ATP synthase subunit beta"/>
    <property type="match status" value="1"/>
</dbReference>
<dbReference type="FunFam" id="3.40.50.300:FF:000004">
    <property type="entry name" value="ATP synthase subunit beta"/>
    <property type="match status" value="1"/>
</dbReference>
<dbReference type="Gene3D" id="2.40.10.170">
    <property type="match status" value="1"/>
</dbReference>
<dbReference type="Gene3D" id="1.10.1140.10">
    <property type="entry name" value="Bovine Mitochondrial F1-atpase, Atp Synthase Beta Chain, Chain D, domain 3"/>
    <property type="match status" value="1"/>
</dbReference>
<dbReference type="Gene3D" id="3.40.50.300">
    <property type="entry name" value="P-loop containing nucleotide triphosphate hydrolases"/>
    <property type="match status" value="1"/>
</dbReference>
<dbReference type="HAMAP" id="MF_01347">
    <property type="entry name" value="ATP_synth_beta_bact"/>
    <property type="match status" value="1"/>
</dbReference>
<dbReference type="InterPro" id="IPR003593">
    <property type="entry name" value="AAA+_ATPase"/>
</dbReference>
<dbReference type="InterPro" id="IPR055190">
    <property type="entry name" value="ATP-synt_VA_C"/>
</dbReference>
<dbReference type="InterPro" id="IPR005722">
    <property type="entry name" value="ATP_synth_F1_bsu"/>
</dbReference>
<dbReference type="InterPro" id="IPR050053">
    <property type="entry name" value="ATPase_alpha/beta_chains"/>
</dbReference>
<dbReference type="InterPro" id="IPR004100">
    <property type="entry name" value="ATPase_F1/V1/A1_a/bsu_N"/>
</dbReference>
<dbReference type="InterPro" id="IPR036121">
    <property type="entry name" value="ATPase_F1/V1/A1_a/bsu_N_sf"/>
</dbReference>
<dbReference type="InterPro" id="IPR000194">
    <property type="entry name" value="ATPase_F1/V1/A1_a/bsu_nucl-bd"/>
</dbReference>
<dbReference type="InterPro" id="IPR024034">
    <property type="entry name" value="ATPase_F1/V1_b/a_C"/>
</dbReference>
<dbReference type="InterPro" id="IPR027417">
    <property type="entry name" value="P-loop_NTPase"/>
</dbReference>
<dbReference type="NCBIfam" id="TIGR01039">
    <property type="entry name" value="atpD"/>
    <property type="match status" value="1"/>
</dbReference>
<dbReference type="PANTHER" id="PTHR15184">
    <property type="entry name" value="ATP SYNTHASE"/>
    <property type="match status" value="1"/>
</dbReference>
<dbReference type="PANTHER" id="PTHR15184:SF71">
    <property type="entry name" value="ATP SYNTHASE SUBUNIT BETA, MITOCHONDRIAL"/>
    <property type="match status" value="1"/>
</dbReference>
<dbReference type="Pfam" id="PF00006">
    <property type="entry name" value="ATP-synt_ab"/>
    <property type="match status" value="1"/>
</dbReference>
<dbReference type="Pfam" id="PF02874">
    <property type="entry name" value="ATP-synt_ab_N"/>
    <property type="match status" value="1"/>
</dbReference>
<dbReference type="Pfam" id="PF22919">
    <property type="entry name" value="ATP-synt_VA_C"/>
    <property type="match status" value="1"/>
</dbReference>
<dbReference type="SMART" id="SM00382">
    <property type="entry name" value="AAA"/>
    <property type="match status" value="1"/>
</dbReference>
<dbReference type="SUPFAM" id="SSF47917">
    <property type="entry name" value="C-terminal domain of alpha and beta subunits of F1 ATP synthase"/>
    <property type="match status" value="1"/>
</dbReference>
<dbReference type="SUPFAM" id="SSF50615">
    <property type="entry name" value="N-terminal domain of alpha and beta subunits of F1 ATP synthase"/>
    <property type="match status" value="1"/>
</dbReference>
<dbReference type="SUPFAM" id="SSF52540">
    <property type="entry name" value="P-loop containing nucleoside triphosphate hydrolases"/>
    <property type="match status" value="1"/>
</dbReference>
<feature type="chain" id="PRO_0000254419" description="ATP synthase subunit beta">
    <location>
        <begin position="1"/>
        <end position="464"/>
    </location>
</feature>
<feature type="binding site" evidence="1">
    <location>
        <begin position="152"/>
        <end position="159"/>
    </location>
    <ligand>
        <name>ATP</name>
        <dbReference type="ChEBI" id="CHEBI:30616"/>
    </ligand>
</feature>
<gene>
    <name evidence="1" type="primary">atpD</name>
    <name type="ordered locus">UU129</name>
</gene>
<sequence length="464" mass="50834">MTEVKKGKINQILGPVVDVRFPSEWLPEINTALELNNHGSKLVLEVSQLVGDNIARCIAMDTTDGLVRGQEVINTQKPITMPVGKQVLGRMFNVTGDPIDEQPAPTGKRMPIHRPAPSFAEQAESIEILETGIKVVDLLVPFAKGGKIGLFGGAGVGKTVLMQELIHNIAKNHGGLSVFAGVGERTREGNDLYYEMAESDVLDKTALVFGQMNEPPGARMRVALSGLTMAEEFRDAFGQDVLLFIDNIFRFTQAGSEVSALLGRMPSAVGYQPTLAFEMGQLQERITSTKKGSITSVQAVYVPADDLTDPAPATTFSHLDAKVVLDRAIASLGLYPAISPLQSTSRLLDPLVVGVKHYSVARRVIEILQRFMELQDIIAILGMDELSEEDRQLVMRARKVRNYLSQPSHVAEKFSGQPGLSVKLEDTIEGFRKILDGECDDIHEQHFLYVGKIDDVFEKAAKNK</sequence>
<protein>
    <recommendedName>
        <fullName evidence="1">ATP synthase subunit beta</fullName>
        <ecNumber evidence="1">7.1.2.2</ecNumber>
    </recommendedName>
    <alternativeName>
        <fullName evidence="1">ATP synthase F1 sector subunit beta</fullName>
    </alternativeName>
    <alternativeName>
        <fullName evidence="1">F-ATPase subunit beta</fullName>
    </alternativeName>
</protein>
<keyword id="KW-0066">ATP synthesis</keyword>
<keyword id="KW-0067">ATP-binding</keyword>
<keyword id="KW-1003">Cell membrane</keyword>
<keyword id="KW-0139">CF(1)</keyword>
<keyword id="KW-0375">Hydrogen ion transport</keyword>
<keyword id="KW-0406">Ion transport</keyword>
<keyword id="KW-0472">Membrane</keyword>
<keyword id="KW-0547">Nucleotide-binding</keyword>
<keyword id="KW-1185">Reference proteome</keyword>
<keyword id="KW-1278">Translocase</keyword>
<keyword id="KW-0813">Transport</keyword>
<comment type="function">
    <text evidence="1">Produces ATP from ADP in the presence of a proton gradient across the membrane. The catalytic sites are hosted primarily by the beta subunits.</text>
</comment>
<comment type="catalytic activity">
    <reaction evidence="1">
        <text>ATP + H2O + 4 H(+)(in) = ADP + phosphate + 5 H(+)(out)</text>
        <dbReference type="Rhea" id="RHEA:57720"/>
        <dbReference type="ChEBI" id="CHEBI:15377"/>
        <dbReference type="ChEBI" id="CHEBI:15378"/>
        <dbReference type="ChEBI" id="CHEBI:30616"/>
        <dbReference type="ChEBI" id="CHEBI:43474"/>
        <dbReference type="ChEBI" id="CHEBI:456216"/>
        <dbReference type="EC" id="7.1.2.2"/>
    </reaction>
</comment>
<comment type="subunit">
    <text evidence="1">F-type ATPases have 2 components, CF(1) - the catalytic core - and CF(0) - the membrane proton channel. CF(1) has five subunits: alpha(3), beta(3), gamma(1), delta(1), epsilon(1). CF(0) has three main subunits: a(1), b(2) and c(9-12). The alpha and beta chains form an alternating ring which encloses part of the gamma chain. CF(1) is attached to CF(0) by a central stalk formed by the gamma and epsilon chains, while a peripheral stalk is formed by the delta and b chains.</text>
</comment>
<comment type="subcellular location">
    <subcellularLocation>
        <location evidence="1">Cell membrane</location>
        <topology evidence="1">Peripheral membrane protein</topology>
    </subcellularLocation>
</comment>
<comment type="similarity">
    <text evidence="1">Belongs to the ATPase alpha/beta chains family.</text>
</comment>
<organism>
    <name type="scientific">Ureaplasma parvum serovar 3 (strain ATCC 700970)</name>
    <dbReference type="NCBI Taxonomy" id="273119"/>
    <lineage>
        <taxon>Bacteria</taxon>
        <taxon>Bacillati</taxon>
        <taxon>Mycoplasmatota</taxon>
        <taxon>Mycoplasmoidales</taxon>
        <taxon>Mycoplasmoidaceae</taxon>
        <taxon>Ureaplasma</taxon>
    </lineage>
</organism>